<sequence>MSTENDYIVADIGLADFGRKEITIAETEMPGLMACRAEFGETKPLKGARITGSLHMTIQTAVLIETLVALGAEVRWASCNIFSTQDHAAAAIAASGVPVYAIKGESLEDYWIYTDKIFQWADGGFSNMILDDGGDATMYILLGARAEAGEDVLSDPHSEEEEILFAQIKKRLKASPGWFTKQRDAIKGVTEETTTGVNRLYQLSQKGLLPFPAINVNDSVTKSKFDNKYGCKESLVDGIRRATDVMMAGKVAVVCGYGDVGKGSAASLSGAGARVKVTEVDPICALQAAMDGYEVVLLEDVVSSADIFISTTGNKDVIRIDHMRAMKDMAIVGNIGHFDNEIQVAALRNLKWTNVKPQVDLIEFAKGNRIILLSEGRLLNLGNATGHPSFVMSASFTNQTLAQIELFTKPGQYQNQVYVLPKHLDEKVARLHLGKLGVKLTELSGEQAAYIGVTPQGPFKSDHYRY</sequence>
<feature type="chain" id="PRO_1000196667" description="Adenosylhomocysteinase">
    <location>
        <begin position="1"/>
        <end position="466"/>
    </location>
</feature>
<feature type="binding site" evidence="1">
    <location>
        <position position="57"/>
    </location>
    <ligand>
        <name>substrate</name>
    </ligand>
</feature>
<feature type="binding site" evidence="1">
    <location>
        <position position="132"/>
    </location>
    <ligand>
        <name>substrate</name>
    </ligand>
</feature>
<feature type="binding site" evidence="1">
    <location>
        <position position="192"/>
    </location>
    <ligand>
        <name>substrate</name>
    </ligand>
</feature>
<feature type="binding site" evidence="1">
    <location>
        <begin position="193"/>
        <end position="195"/>
    </location>
    <ligand>
        <name>NAD(+)</name>
        <dbReference type="ChEBI" id="CHEBI:57540"/>
    </ligand>
</feature>
<feature type="binding site" evidence="1">
    <location>
        <position position="222"/>
    </location>
    <ligand>
        <name>substrate</name>
    </ligand>
</feature>
<feature type="binding site" evidence="1">
    <location>
        <position position="226"/>
    </location>
    <ligand>
        <name>substrate</name>
    </ligand>
</feature>
<feature type="binding site" evidence="1">
    <location>
        <position position="227"/>
    </location>
    <ligand>
        <name>NAD(+)</name>
        <dbReference type="ChEBI" id="CHEBI:57540"/>
    </ligand>
</feature>
<feature type="binding site" evidence="1">
    <location>
        <begin position="256"/>
        <end position="261"/>
    </location>
    <ligand>
        <name>NAD(+)</name>
        <dbReference type="ChEBI" id="CHEBI:57540"/>
    </ligand>
</feature>
<feature type="binding site" evidence="1">
    <location>
        <position position="279"/>
    </location>
    <ligand>
        <name>NAD(+)</name>
        <dbReference type="ChEBI" id="CHEBI:57540"/>
    </ligand>
</feature>
<feature type="binding site" evidence="1">
    <location>
        <position position="314"/>
    </location>
    <ligand>
        <name>NAD(+)</name>
        <dbReference type="ChEBI" id="CHEBI:57540"/>
    </ligand>
</feature>
<feature type="binding site" evidence="1">
    <location>
        <begin position="335"/>
        <end position="337"/>
    </location>
    <ligand>
        <name>NAD(+)</name>
        <dbReference type="ChEBI" id="CHEBI:57540"/>
    </ligand>
</feature>
<feature type="binding site" evidence="1">
    <location>
        <position position="380"/>
    </location>
    <ligand>
        <name>NAD(+)</name>
        <dbReference type="ChEBI" id="CHEBI:57540"/>
    </ligand>
</feature>
<protein>
    <recommendedName>
        <fullName evidence="1">Adenosylhomocysteinase</fullName>
        <ecNumber evidence="1">3.13.2.1</ecNumber>
    </recommendedName>
    <alternativeName>
        <fullName evidence="1">S-adenosyl-L-homocysteine hydrolase</fullName>
        <shortName evidence="1">AdoHcyase</shortName>
    </alternativeName>
</protein>
<dbReference type="EC" id="3.13.2.1" evidence="1"/>
<dbReference type="EMBL" id="CP000628">
    <property type="protein sequence ID" value="ACM24836.1"/>
    <property type="molecule type" value="Genomic_DNA"/>
</dbReference>
<dbReference type="RefSeq" id="WP_007698591.1">
    <property type="nucleotide sequence ID" value="NC_011985.1"/>
</dbReference>
<dbReference type="SMR" id="B9JG53"/>
<dbReference type="STRING" id="311403.Arad_0039"/>
<dbReference type="GeneID" id="86850439"/>
<dbReference type="KEGG" id="ara:Arad_0039"/>
<dbReference type="eggNOG" id="COG0499">
    <property type="taxonomic scope" value="Bacteria"/>
</dbReference>
<dbReference type="HOGENOM" id="CLU_025194_2_1_5"/>
<dbReference type="UniPathway" id="UPA00314">
    <property type="reaction ID" value="UER00076"/>
</dbReference>
<dbReference type="Proteomes" id="UP000001600">
    <property type="component" value="Chromosome 1"/>
</dbReference>
<dbReference type="GO" id="GO:0005829">
    <property type="term" value="C:cytosol"/>
    <property type="evidence" value="ECO:0007669"/>
    <property type="project" value="TreeGrafter"/>
</dbReference>
<dbReference type="GO" id="GO:0004013">
    <property type="term" value="F:adenosylhomocysteinase activity"/>
    <property type="evidence" value="ECO:0007669"/>
    <property type="project" value="UniProtKB-UniRule"/>
</dbReference>
<dbReference type="GO" id="GO:0071269">
    <property type="term" value="P:L-homocysteine biosynthetic process"/>
    <property type="evidence" value="ECO:0007669"/>
    <property type="project" value="UniProtKB-UniRule"/>
</dbReference>
<dbReference type="GO" id="GO:0006730">
    <property type="term" value="P:one-carbon metabolic process"/>
    <property type="evidence" value="ECO:0007669"/>
    <property type="project" value="UniProtKB-KW"/>
</dbReference>
<dbReference type="GO" id="GO:0033353">
    <property type="term" value="P:S-adenosylmethionine cycle"/>
    <property type="evidence" value="ECO:0007669"/>
    <property type="project" value="TreeGrafter"/>
</dbReference>
<dbReference type="CDD" id="cd00401">
    <property type="entry name" value="SAHH"/>
    <property type="match status" value="1"/>
</dbReference>
<dbReference type="FunFam" id="3.40.50.720:FF:000004">
    <property type="entry name" value="Adenosylhomocysteinase"/>
    <property type="match status" value="1"/>
</dbReference>
<dbReference type="Gene3D" id="3.40.50.1480">
    <property type="entry name" value="Adenosylhomocysteinase-like"/>
    <property type="match status" value="1"/>
</dbReference>
<dbReference type="Gene3D" id="3.40.50.720">
    <property type="entry name" value="NAD(P)-binding Rossmann-like Domain"/>
    <property type="match status" value="1"/>
</dbReference>
<dbReference type="HAMAP" id="MF_00563">
    <property type="entry name" value="AdoHcyase"/>
    <property type="match status" value="1"/>
</dbReference>
<dbReference type="InterPro" id="IPR042172">
    <property type="entry name" value="Adenosylhomocyst_ase-like_sf"/>
</dbReference>
<dbReference type="InterPro" id="IPR000043">
    <property type="entry name" value="Adenosylhomocysteinase-like"/>
</dbReference>
<dbReference type="InterPro" id="IPR015878">
    <property type="entry name" value="Ado_hCys_hydrolase_NAD-bd"/>
</dbReference>
<dbReference type="InterPro" id="IPR036291">
    <property type="entry name" value="NAD(P)-bd_dom_sf"/>
</dbReference>
<dbReference type="InterPro" id="IPR020082">
    <property type="entry name" value="S-Ado-L-homoCys_hydrolase_CS"/>
</dbReference>
<dbReference type="NCBIfam" id="TIGR00936">
    <property type="entry name" value="ahcY"/>
    <property type="match status" value="1"/>
</dbReference>
<dbReference type="NCBIfam" id="NF004005">
    <property type="entry name" value="PRK05476.2-3"/>
    <property type="match status" value="1"/>
</dbReference>
<dbReference type="PANTHER" id="PTHR23420">
    <property type="entry name" value="ADENOSYLHOMOCYSTEINASE"/>
    <property type="match status" value="1"/>
</dbReference>
<dbReference type="PANTHER" id="PTHR23420:SF0">
    <property type="entry name" value="ADENOSYLHOMOCYSTEINASE"/>
    <property type="match status" value="1"/>
</dbReference>
<dbReference type="Pfam" id="PF05221">
    <property type="entry name" value="AdoHcyase"/>
    <property type="match status" value="1"/>
</dbReference>
<dbReference type="Pfam" id="PF00670">
    <property type="entry name" value="AdoHcyase_NAD"/>
    <property type="match status" value="1"/>
</dbReference>
<dbReference type="PIRSF" id="PIRSF001109">
    <property type="entry name" value="Ad_hcy_hydrolase"/>
    <property type="match status" value="1"/>
</dbReference>
<dbReference type="SMART" id="SM00996">
    <property type="entry name" value="AdoHcyase"/>
    <property type="match status" value="1"/>
</dbReference>
<dbReference type="SMART" id="SM00997">
    <property type="entry name" value="AdoHcyase_NAD"/>
    <property type="match status" value="1"/>
</dbReference>
<dbReference type="SUPFAM" id="SSF52283">
    <property type="entry name" value="Formate/glycerate dehydrogenase catalytic domain-like"/>
    <property type="match status" value="1"/>
</dbReference>
<dbReference type="SUPFAM" id="SSF51735">
    <property type="entry name" value="NAD(P)-binding Rossmann-fold domains"/>
    <property type="match status" value="1"/>
</dbReference>
<dbReference type="PROSITE" id="PS00738">
    <property type="entry name" value="ADOHCYASE_1"/>
    <property type="match status" value="1"/>
</dbReference>
<dbReference type="PROSITE" id="PS00739">
    <property type="entry name" value="ADOHCYASE_2"/>
    <property type="match status" value="1"/>
</dbReference>
<organism>
    <name type="scientific">Rhizobium rhizogenes (strain K84 / ATCC BAA-868)</name>
    <name type="common">Agrobacterium radiobacter</name>
    <dbReference type="NCBI Taxonomy" id="311403"/>
    <lineage>
        <taxon>Bacteria</taxon>
        <taxon>Pseudomonadati</taxon>
        <taxon>Pseudomonadota</taxon>
        <taxon>Alphaproteobacteria</taxon>
        <taxon>Hyphomicrobiales</taxon>
        <taxon>Rhizobiaceae</taxon>
        <taxon>Rhizobium/Agrobacterium group</taxon>
        <taxon>Rhizobium</taxon>
    </lineage>
</organism>
<comment type="function">
    <text evidence="1">May play a key role in the regulation of the intracellular concentration of adenosylhomocysteine.</text>
</comment>
<comment type="catalytic activity">
    <reaction evidence="1">
        <text>S-adenosyl-L-homocysteine + H2O = L-homocysteine + adenosine</text>
        <dbReference type="Rhea" id="RHEA:21708"/>
        <dbReference type="ChEBI" id="CHEBI:15377"/>
        <dbReference type="ChEBI" id="CHEBI:16335"/>
        <dbReference type="ChEBI" id="CHEBI:57856"/>
        <dbReference type="ChEBI" id="CHEBI:58199"/>
        <dbReference type="EC" id="3.13.2.1"/>
    </reaction>
</comment>
<comment type="cofactor">
    <cofactor evidence="1">
        <name>NAD(+)</name>
        <dbReference type="ChEBI" id="CHEBI:57540"/>
    </cofactor>
    <text evidence="1">Binds 1 NAD(+) per subunit.</text>
</comment>
<comment type="pathway">
    <text evidence="1">Amino-acid biosynthesis; L-homocysteine biosynthesis; L-homocysteine from S-adenosyl-L-homocysteine: step 1/1.</text>
</comment>
<comment type="subcellular location">
    <subcellularLocation>
        <location evidence="1">Cytoplasm</location>
    </subcellularLocation>
</comment>
<comment type="similarity">
    <text evidence="1">Belongs to the adenosylhomocysteinase family.</text>
</comment>
<name>SAHH_RHIR8</name>
<reference key="1">
    <citation type="journal article" date="2009" name="J. Bacteriol.">
        <title>Genome sequences of three Agrobacterium biovars help elucidate the evolution of multichromosome genomes in bacteria.</title>
        <authorList>
            <person name="Slater S.C."/>
            <person name="Goldman B.S."/>
            <person name="Goodner B."/>
            <person name="Setubal J.C."/>
            <person name="Farrand S.K."/>
            <person name="Nester E.W."/>
            <person name="Burr T.J."/>
            <person name="Banta L."/>
            <person name="Dickerman A.W."/>
            <person name="Paulsen I."/>
            <person name="Otten L."/>
            <person name="Suen G."/>
            <person name="Welch R."/>
            <person name="Almeida N.F."/>
            <person name="Arnold F."/>
            <person name="Burton O.T."/>
            <person name="Du Z."/>
            <person name="Ewing A."/>
            <person name="Godsy E."/>
            <person name="Heisel S."/>
            <person name="Houmiel K.L."/>
            <person name="Jhaveri J."/>
            <person name="Lu J."/>
            <person name="Miller N.M."/>
            <person name="Norton S."/>
            <person name="Chen Q."/>
            <person name="Phoolcharoen W."/>
            <person name="Ohlin V."/>
            <person name="Ondrusek D."/>
            <person name="Pride N."/>
            <person name="Stricklin S.L."/>
            <person name="Sun J."/>
            <person name="Wheeler C."/>
            <person name="Wilson L."/>
            <person name="Zhu H."/>
            <person name="Wood D.W."/>
        </authorList>
    </citation>
    <scope>NUCLEOTIDE SEQUENCE [LARGE SCALE GENOMIC DNA]</scope>
    <source>
        <strain>K84 / ATCC BAA-868</strain>
    </source>
</reference>
<gene>
    <name evidence="1" type="primary">ahcY</name>
    <name type="ordered locus">Arad_0039</name>
</gene>
<accession>B9JG53</accession>
<keyword id="KW-0963">Cytoplasm</keyword>
<keyword id="KW-0378">Hydrolase</keyword>
<keyword id="KW-0520">NAD</keyword>
<keyword id="KW-0554">One-carbon metabolism</keyword>
<evidence type="ECO:0000255" key="1">
    <source>
        <dbReference type="HAMAP-Rule" id="MF_00563"/>
    </source>
</evidence>
<proteinExistence type="inferred from homology"/>